<protein>
    <recommendedName>
        <fullName>Histone H2B.2, sperm</fullName>
    </recommendedName>
</protein>
<keyword id="KW-0158">Chromosome</keyword>
<keyword id="KW-0903">Direct protein sequencing</keyword>
<keyword id="KW-0238">DNA-binding</keyword>
<keyword id="KW-0325">Glycoprotein</keyword>
<keyword id="KW-1017">Isopeptide bond</keyword>
<keyword id="KW-0544">Nucleosome core</keyword>
<keyword id="KW-0539">Nucleus</keyword>
<keyword id="KW-0597">Phosphoprotein</keyword>
<keyword id="KW-0832">Ubl conjugation</keyword>
<sequence>MPRSPAKTSPRKGSPRKGSPSRKASPKRGGKGAKRAGKGGRRRRVVKRRRRRRESYGIYIYKVLKQVHPDTGISSRAMSVMNSFVNDVFERIAGEASRLTSANRRSTVSSREIQTAVRLLLPGELAKHAVSEGTKAVTKYTTSR</sequence>
<name>H2BS2_PARAN</name>
<organism>
    <name type="scientific">Parechinus angulosus</name>
    <name type="common">Angulate sea urchin</name>
    <name type="synonym">Cidaris angulosus</name>
    <dbReference type="NCBI Taxonomy" id="7658"/>
    <lineage>
        <taxon>Eukaryota</taxon>
        <taxon>Metazoa</taxon>
        <taxon>Echinodermata</taxon>
        <taxon>Eleutherozoa</taxon>
        <taxon>Echinozoa</taxon>
        <taxon>Echinoidea</taxon>
        <taxon>Euechinoidea</taxon>
        <taxon>Echinacea</taxon>
        <taxon>Camarodonta</taxon>
        <taxon>Echinidea</taxon>
        <taxon>Echinidae</taxon>
        <taxon>Parechinus</taxon>
    </lineage>
</organism>
<reference key="1">
    <citation type="journal article" date="1977" name="Eur. J. Biochem.">
        <title>The complete amino-acid sequence of histone H2B(2) from sperm of the sea urchin Parechinus angulosus.</title>
        <authorList>
            <person name="Strickland W.N."/>
            <person name="Strickland M."/>
            <person name="Brandt W.F."/>
            <person name="von Holt C."/>
        </authorList>
    </citation>
    <scope>PROTEIN SEQUENCE OF 2-144</scope>
</reference>
<dbReference type="PIR" id="A02619">
    <property type="entry name" value="HSUR6P"/>
</dbReference>
<dbReference type="SMR" id="P02291"/>
<dbReference type="GO" id="GO:0000786">
    <property type="term" value="C:nucleosome"/>
    <property type="evidence" value="ECO:0007669"/>
    <property type="project" value="UniProtKB-KW"/>
</dbReference>
<dbReference type="GO" id="GO:0005634">
    <property type="term" value="C:nucleus"/>
    <property type="evidence" value="ECO:0007669"/>
    <property type="project" value="UniProtKB-SubCell"/>
</dbReference>
<dbReference type="GO" id="GO:0003677">
    <property type="term" value="F:DNA binding"/>
    <property type="evidence" value="ECO:0007669"/>
    <property type="project" value="UniProtKB-KW"/>
</dbReference>
<dbReference type="GO" id="GO:0046982">
    <property type="term" value="F:protein heterodimerization activity"/>
    <property type="evidence" value="ECO:0007669"/>
    <property type="project" value="InterPro"/>
</dbReference>
<dbReference type="GO" id="GO:0030527">
    <property type="term" value="F:structural constituent of chromatin"/>
    <property type="evidence" value="ECO:0007669"/>
    <property type="project" value="InterPro"/>
</dbReference>
<dbReference type="CDD" id="cd22910">
    <property type="entry name" value="HFD_H2B"/>
    <property type="match status" value="1"/>
</dbReference>
<dbReference type="FunFam" id="1.10.20.10:FF:000016">
    <property type="entry name" value="Histone H2B"/>
    <property type="match status" value="1"/>
</dbReference>
<dbReference type="Gene3D" id="1.10.20.10">
    <property type="entry name" value="Histone, subunit A"/>
    <property type="match status" value="1"/>
</dbReference>
<dbReference type="InterPro" id="IPR009072">
    <property type="entry name" value="Histone-fold"/>
</dbReference>
<dbReference type="InterPro" id="IPR007125">
    <property type="entry name" value="Histone_H2A/H2B/H3"/>
</dbReference>
<dbReference type="InterPro" id="IPR000558">
    <property type="entry name" value="Histone_H2B"/>
</dbReference>
<dbReference type="InterPro" id="IPR055333">
    <property type="entry name" value="HISTONE_H2B_site"/>
</dbReference>
<dbReference type="PANTHER" id="PTHR23428">
    <property type="entry name" value="HISTONE H2B"/>
    <property type="match status" value="1"/>
</dbReference>
<dbReference type="Pfam" id="PF00125">
    <property type="entry name" value="Histone"/>
    <property type="match status" value="1"/>
</dbReference>
<dbReference type="PRINTS" id="PR00621">
    <property type="entry name" value="HISTONEH2B"/>
</dbReference>
<dbReference type="SMART" id="SM00427">
    <property type="entry name" value="H2B"/>
    <property type="match status" value="1"/>
</dbReference>
<dbReference type="SUPFAM" id="SSF47113">
    <property type="entry name" value="Histone-fold"/>
    <property type="match status" value="1"/>
</dbReference>
<dbReference type="PROSITE" id="PS00357">
    <property type="entry name" value="HISTONE_H2B"/>
    <property type="match status" value="1"/>
</dbReference>
<accession>P02291</accession>
<comment type="function">
    <text>Core component of nucleosome. Nucleosomes wrap and compact DNA into chromatin, limiting DNA accessibility to the cellular machineries which require DNA as a template. Histones thereby play a central role in transcription regulation, DNA repair, DNA replication and chromosomal stability. DNA accessibility is regulated via a complex set of post-translational modifications of histones, also called histone code, and nucleosome remodeling.</text>
</comment>
<comment type="subunit">
    <text>The nucleosome is a histone octamer containing two molecules each of H2A, H2B, H3 and H4 assembled in one H3-H4 heterotetramer and two H2A-H2B heterodimers. The octamer wraps approximately 147 bp of DNA.</text>
</comment>
<comment type="subcellular location">
    <subcellularLocation>
        <location>Nucleus</location>
    </subcellularLocation>
    <subcellularLocation>
        <location>Chromosome</location>
    </subcellularLocation>
</comment>
<comment type="domain">
    <text>Contains 5 SPKK motifs which may interact with the minor groove of A/T-rich DNA sites. Phosphorylation of this motif may regulate DNA binding. This motif is reiterated in both termini of histone H1 and in the C-terminus of plant H2A, but its presence in the N-terminus seems to be unique to sea urchin histones H2B.</text>
</comment>
<comment type="PTM">
    <text evidence="1">Monoubiquitination of Lys-139 gives a specific tag for epigenetic transcriptional activation and is also prerequisite for histone H3 'Lys-4' and 'Lys-79' methylation.</text>
</comment>
<comment type="PTM">
    <text evidence="1">Phosphorylated on SPKK motifs 3, 4 and 5; which may regulate DNA binding. Dephosphorylated during maturation of spermatids to mature sperm and rephosphorylated at fertilization (By similarity).</text>
</comment>
<comment type="similarity">
    <text evidence="4">Belongs to the histone H2B family.</text>
</comment>
<proteinExistence type="evidence at protein level"/>
<evidence type="ECO:0000250" key="1"/>
<evidence type="ECO:0000256" key="2">
    <source>
        <dbReference type="SAM" id="MobiDB-lite"/>
    </source>
</evidence>
<evidence type="ECO:0000269" key="3">
    <source>
    </source>
</evidence>
<evidence type="ECO:0000305" key="4"/>
<feature type="initiator methionine" description="Removed" evidence="3">
    <location>
        <position position="1"/>
    </location>
</feature>
<feature type="chain" id="PRO_0000071889" description="Histone H2B.2, sperm">
    <location>
        <begin position="2"/>
        <end position="144"/>
    </location>
</feature>
<feature type="region of interest" description="Disordered" evidence="2">
    <location>
        <begin position="1"/>
        <end position="51"/>
    </location>
</feature>
<feature type="short sequence motif" description="SPKK motif 1">
    <location>
        <begin position="4"/>
        <end position="7"/>
    </location>
</feature>
<feature type="short sequence motif" description="SPKK motif 2">
    <location>
        <begin position="9"/>
        <end position="12"/>
    </location>
</feature>
<feature type="short sequence motif" description="SPKK motif 3">
    <location>
        <begin position="14"/>
        <end position="17"/>
    </location>
</feature>
<feature type="short sequence motif" description="SPKK motif 4">
    <location>
        <begin position="19"/>
        <end position="22"/>
    </location>
</feature>
<feature type="short sequence motif" description="SPKK motif 5">
    <location>
        <begin position="25"/>
        <end position="28"/>
    </location>
</feature>
<feature type="compositionally biased region" description="Basic residues" evidence="2">
    <location>
        <begin position="24"/>
        <end position="51"/>
    </location>
</feature>
<feature type="modified residue" description="Phosphoserine" evidence="1">
    <location>
        <position position="14"/>
    </location>
</feature>
<feature type="modified residue" description="Phosphoserine" evidence="1">
    <location>
        <position position="19"/>
    </location>
</feature>
<feature type="modified residue" description="Phosphoserine" evidence="1">
    <location>
        <position position="25"/>
    </location>
</feature>
<feature type="glycosylation site" description="O-linked (GlcNAc) serine" evidence="1">
    <location>
        <position position="131"/>
    </location>
</feature>
<feature type="cross-link" description="Glycyl lysine isopeptide (Lys-Gly) (interchain with G-Cter in ubiquitin)" evidence="1">
    <location>
        <position position="139"/>
    </location>
</feature>